<dbReference type="EC" id="2.5.1.141" evidence="1"/>
<dbReference type="EMBL" id="AE017355">
    <property type="protein sequence ID" value="AAT63720.1"/>
    <property type="molecule type" value="Genomic_DNA"/>
</dbReference>
<dbReference type="RefSeq" id="WP_001015052.1">
    <property type="nucleotide sequence ID" value="NC_005957.1"/>
</dbReference>
<dbReference type="RefSeq" id="YP_038007.1">
    <property type="nucleotide sequence ID" value="NC_005957.1"/>
</dbReference>
<dbReference type="SMR" id="Q6HEL9"/>
<dbReference type="GeneID" id="45023832"/>
<dbReference type="KEGG" id="btk:BT9727_3688"/>
<dbReference type="PATRIC" id="fig|281309.8.peg.3926"/>
<dbReference type="HOGENOM" id="CLU_029631_0_0_9"/>
<dbReference type="UniPathway" id="UPA00834">
    <property type="reaction ID" value="UER00712"/>
</dbReference>
<dbReference type="Proteomes" id="UP000001301">
    <property type="component" value="Chromosome"/>
</dbReference>
<dbReference type="GO" id="GO:0005886">
    <property type="term" value="C:plasma membrane"/>
    <property type="evidence" value="ECO:0007669"/>
    <property type="project" value="UniProtKB-SubCell"/>
</dbReference>
<dbReference type="GO" id="GO:0008495">
    <property type="term" value="F:protoheme IX farnesyltransferase activity"/>
    <property type="evidence" value="ECO:0007669"/>
    <property type="project" value="UniProtKB-UniRule"/>
</dbReference>
<dbReference type="GO" id="GO:0048034">
    <property type="term" value="P:heme O biosynthetic process"/>
    <property type="evidence" value="ECO:0007669"/>
    <property type="project" value="UniProtKB-UniRule"/>
</dbReference>
<dbReference type="CDD" id="cd13957">
    <property type="entry name" value="PT_UbiA_Cox10"/>
    <property type="match status" value="1"/>
</dbReference>
<dbReference type="FunFam" id="1.10.357.140:FF:000001">
    <property type="entry name" value="Protoheme IX farnesyltransferase"/>
    <property type="match status" value="1"/>
</dbReference>
<dbReference type="Gene3D" id="1.10.357.140">
    <property type="entry name" value="UbiA prenyltransferase"/>
    <property type="match status" value="1"/>
</dbReference>
<dbReference type="HAMAP" id="MF_00154">
    <property type="entry name" value="CyoE_CtaB"/>
    <property type="match status" value="1"/>
</dbReference>
<dbReference type="InterPro" id="IPR006369">
    <property type="entry name" value="Protohaem_IX_farnesylTrfase"/>
</dbReference>
<dbReference type="InterPro" id="IPR000537">
    <property type="entry name" value="UbiA_prenyltransferase"/>
</dbReference>
<dbReference type="InterPro" id="IPR030470">
    <property type="entry name" value="UbiA_prenylTrfase_CS"/>
</dbReference>
<dbReference type="InterPro" id="IPR044878">
    <property type="entry name" value="UbiA_sf"/>
</dbReference>
<dbReference type="NCBIfam" id="TIGR01473">
    <property type="entry name" value="cyoE_ctaB"/>
    <property type="match status" value="1"/>
</dbReference>
<dbReference type="PANTHER" id="PTHR43448">
    <property type="entry name" value="PROTOHEME IX FARNESYLTRANSFERASE, MITOCHONDRIAL"/>
    <property type="match status" value="1"/>
</dbReference>
<dbReference type="PANTHER" id="PTHR43448:SF2">
    <property type="entry name" value="PROTOHEME IX FARNESYLTRANSFERASE, MITOCHONDRIAL"/>
    <property type="match status" value="1"/>
</dbReference>
<dbReference type="Pfam" id="PF01040">
    <property type="entry name" value="UbiA"/>
    <property type="match status" value="1"/>
</dbReference>
<dbReference type="PROSITE" id="PS00943">
    <property type="entry name" value="UBIA"/>
    <property type="match status" value="1"/>
</dbReference>
<sequence>MNHATSELHDESAVTSIPETTRLQDLKALVKMGIVNSNTLTVFTGFWLALHFNGLSVMDNLDKLFFTIVGSGLVMAGVCCLNNYIDRDIDPLMERTKTRPTVTGKYKPGFALTFGLVILLLGFVFLLLTTPMAVLMGFIGAFTYVVLYSLWTKRKYTLNTVVGSISGAVPPLIGWAAIDPSLGHPIAWMLFLIMFIWQIPHFLALAMKRVDEYRNAGIPMLPVVHGFEITKRQIMIWTVCLLPLPFYMSGLGITFMVIATLLNIGWIVLGFYGFRKKDDIKWSVQMFVYSLNYLTILFVSMIVVTFF</sequence>
<accession>Q6HEL9</accession>
<protein>
    <recommendedName>
        <fullName evidence="1">Protoheme IX farnesyltransferase</fullName>
        <ecNumber evidence="1">2.5.1.141</ecNumber>
    </recommendedName>
    <alternativeName>
        <fullName evidence="1">Heme B farnesyltransferase</fullName>
    </alternativeName>
    <alternativeName>
        <fullName evidence="1">Heme O synthase</fullName>
    </alternativeName>
</protein>
<comment type="function">
    <text evidence="1">Converts heme B (protoheme IX) to heme O by substitution of the vinyl group on carbon 2 of heme B porphyrin ring with a hydroxyethyl farnesyl side group.</text>
</comment>
<comment type="catalytic activity">
    <reaction evidence="1">
        <text>heme b + (2E,6E)-farnesyl diphosphate + H2O = Fe(II)-heme o + diphosphate</text>
        <dbReference type="Rhea" id="RHEA:28070"/>
        <dbReference type="ChEBI" id="CHEBI:15377"/>
        <dbReference type="ChEBI" id="CHEBI:33019"/>
        <dbReference type="ChEBI" id="CHEBI:60344"/>
        <dbReference type="ChEBI" id="CHEBI:60530"/>
        <dbReference type="ChEBI" id="CHEBI:175763"/>
        <dbReference type="EC" id="2.5.1.141"/>
    </reaction>
</comment>
<comment type="pathway">
    <text evidence="1">Porphyrin-containing compound metabolism; heme O biosynthesis; heme O from protoheme: step 1/1.</text>
</comment>
<comment type="subunit">
    <text evidence="1">Interacts with CtaA.</text>
</comment>
<comment type="subcellular location">
    <subcellularLocation>
        <location evidence="1">Cell membrane</location>
        <topology evidence="1">Multi-pass membrane protein</topology>
    </subcellularLocation>
</comment>
<comment type="miscellaneous">
    <text evidence="1">Carbon 2 of the heme B porphyrin ring is defined according to the Fischer nomenclature.</text>
</comment>
<comment type="similarity">
    <text evidence="1">Belongs to the UbiA prenyltransferase family. Protoheme IX farnesyltransferase subfamily.</text>
</comment>
<gene>
    <name evidence="1" type="primary">ctaB</name>
    <name type="ordered locus">BT9727_3688</name>
</gene>
<proteinExistence type="inferred from homology"/>
<keyword id="KW-1003">Cell membrane</keyword>
<keyword id="KW-0350">Heme biosynthesis</keyword>
<keyword id="KW-0472">Membrane</keyword>
<keyword id="KW-0808">Transferase</keyword>
<keyword id="KW-0812">Transmembrane</keyword>
<keyword id="KW-1133">Transmembrane helix</keyword>
<name>COXX_BACHK</name>
<evidence type="ECO:0000255" key="1">
    <source>
        <dbReference type="HAMAP-Rule" id="MF_00154"/>
    </source>
</evidence>
<feature type="chain" id="PRO_0000327009" description="Protoheme IX farnesyltransferase">
    <location>
        <begin position="1"/>
        <end position="307"/>
    </location>
</feature>
<feature type="transmembrane region" description="Helical" evidence="1">
    <location>
        <begin position="32"/>
        <end position="52"/>
    </location>
</feature>
<feature type="transmembrane region" description="Helical" evidence="1">
    <location>
        <begin position="65"/>
        <end position="85"/>
    </location>
</feature>
<feature type="transmembrane region" description="Helical" evidence="1">
    <location>
        <begin position="108"/>
        <end position="128"/>
    </location>
</feature>
<feature type="transmembrane region" description="Helical" evidence="1">
    <location>
        <begin position="131"/>
        <end position="151"/>
    </location>
</feature>
<feature type="transmembrane region" description="Helical" evidence="1">
    <location>
        <begin position="158"/>
        <end position="178"/>
    </location>
</feature>
<feature type="transmembrane region" description="Helical" evidence="1">
    <location>
        <begin position="186"/>
        <end position="206"/>
    </location>
</feature>
<feature type="transmembrane region" description="Helical" evidence="1">
    <location>
        <begin position="251"/>
        <end position="271"/>
    </location>
</feature>
<feature type="transmembrane region" description="Helical" evidence="1">
    <location>
        <begin position="287"/>
        <end position="307"/>
    </location>
</feature>
<organism>
    <name type="scientific">Bacillus thuringiensis subsp. konkukian (strain 97-27)</name>
    <dbReference type="NCBI Taxonomy" id="281309"/>
    <lineage>
        <taxon>Bacteria</taxon>
        <taxon>Bacillati</taxon>
        <taxon>Bacillota</taxon>
        <taxon>Bacilli</taxon>
        <taxon>Bacillales</taxon>
        <taxon>Bacillaceae</taxon>
        <taxon>Bacillus</taxon>
        <taxon>Bacillus cereus group</taxon>
    </lineage>
</organism>
<reference key="1">
    <citation type="journal article" date="2006" name="J. Bacteriol.">
        <title>Pathogenomic sequence analysis of Bacillus cereus and Bacillus thuringiensis isolates closely related to Bacillus anthracis.</title>
        <authorList>
            <person name="Han C.S."/>
            <person name="Xie G."/>
            <person name="Challacombe J.F."/>
            <person name="Altherr M.R."/>
            <person name="Bhotika S.S."/>
            <person name="Bruce D."/>
            <person name="Campbell C.S."/>
            <person name="Campbell M.L."/>
            <person name="Chen J."/>
            <person name="Chertkov O."/>
            <person name="Cleland C."/>
            <person name="Dimitrijevic M."/>
            <person name="Doggett N.A."/>
            <person name="Fawcett J.J."/>
            <person name="Glavina T."/>
            <person name="Goodwin L.A."/>
            <person name="Hill K.K."/>
            <person name="Hitchcock P."/>
            <person name="Jackson P.J."/>
            <person name="Keim P."/>
            <person name="Kewalramani A.R."/>
            <person name="Longmire J."/>
            <person name="Lucas S."/>
            <person name="Malfatti S."/>
            <person name="McMurry K."/>
            <person name="Meincke L.J."/>
            <person name="Misra M."/>
            <person name="Moseman B.L."/>
            <person name="Mundt M."/>
            <person name="Munk A.C."/>
            <person name="Okinaka R.T."/>
            <person name="Parson-Quintana B."/>
            <person name="Reilly L.P."/>
            <person name="Richardson P."/>
            <person name="Robinson D.L."/>
            <person name="Rubin E."/>
            <person name="Saunders E."/>
            <person name="Tapia R."/>
            <person name="Tesmer J.G."/>
            <person name="Thayer N."/>
            <person name="Thompson L.S."/>
            <person name="Tice H."/>
            <person name="Ticknor L.O."/>
            <person name="Wills P.L."/>
            <person name="Brettin T.S."/>
            <person name="Gilna P."/>
        </authorList>
    </citation>
    <scope>NUCLEOTIDE SEQUENCE [LARGE SCALE GENOMIC DNA]</scope>
    <source>
        <strain>97-27</strain>
    </source>
</reference>